<reference key="1">
    <citation type="journal article" date="2003" name="Nature">
        <title>The genome sequence of Bacillus anthracis Ames and comparison to closely related bacteria.</title>
        <authorList>
            <person name="Read T.D."/>
            <person name="Peterson S.N."/>
            <person name="Tourasse N.J."/>
            <person name="Baillie L.W."/>
            <person name="Paulsen I.T."/>
            <person name="Nelson K.E."/>
            <person name="Tettelin H."/>
            <person name="Fouts D.E."/>
            <person name="Eisen J.A."/>
            <person name="Gill S.R."/>
            <person name="Holtzapple E.K."/>
            <person name="Okstad O.A."/>
            <person name="Helgason E."/>
            <person name="Rilstone J."/>
            <person name="Wu M."/>
            <person name="Kolonay J.F."/>
            <person name="Beanan M.J."/>
            <person name="Dodson R.J."/>
            <person name="Brinkac L.M."/>
            <person name="Gwinn M.L."/>
            <person name="DeBoy R.T."/>
            <person name="Madpu R."/>
            <person name="Daugherty S.C."/>
            <person name="Durkin A.S."/>
            <person name="Haft D.H."/>
            <person name="Nelson W.C."/>
            <person name="Peterson J.D."/>
            <person name="Pop M."/>
            <person name="Khouri H.M."/>
            <person name="Radune D."/>
            <person name="Benton J.L."/>
            <person name="Mahamoud Y."/>
            <person name="Jiang L."/>
            <person name="Hance I.R."/>
            <person name="Weidman J.F."/>
            <person name="Berry K.J."/>
            <person name="Plaut R.D."/>
            <person name="Wolf A.M."/>
            <person name="Watkins K.L."/>
            <person name="Nierman W.C."/>
            <person name="Hazen A."/>
            <person name="Cline R.T."/>
            <person name="Redmond C."/>
            <person name="Thwaite J.E."/>
            <person name="White O."/>
            <person name="Salzberg S.L."/>
            <person name="Thomason B."/>
            <person name="Friedlander A.M."/>
            <person name="Koehler T.M."/>
            <person name="Hanna P.C."/>
            <person name="Kolstoe A.-B."/>
            <person name="Fraser C.M."/>
        </authorList>
    </citation>
    <scope>NUCLEOTIDE SEQUENCE [LARGE SCALE GENOMIC DNA]</scope>
    <source>
        <strain>Ames / isolate Porton</strain>
    </source>
</reference>
<reference key="2">
    <citation type="journal article" date="2009" name="J. Bacteriol.">
        <title>The complete genome sequence of Bacillus anthracis Ames 'Ancestor'.</title>
        <authorList>
            <person name="Ravel J."/>
            <person name="Jiang L."/>
            <person name="Stanley S.T."/>
            <person name="Wilson M.R."/>
            <person name="Decker R.S."/>
            <person name="Read T.D."/>
            <person name="Worsham P."/>
            <person name="Keim P.S."/>
            <person name="Salzberg S.L."/>
            <person name="Fraser-Liggett C.M."/>
            <person name="Rasko D.A."/>
        </authorList>
    </citation>
    <scope>NUCLEOTIDE SEQUENCE [LARGE SCALE GENOMIC DNA]</scope>
    <source>
        <strain>Ames ancestor</strain>
    </source>
</reference>
<reference key="3">
    <citation type="submission" date="2004-01" db="EMBL/GenBank/DDBJ databases">
        <title>Complete genome sequence of Bacillus anthracis Sterne.</title>
        <authorList>
            <person name="Brettin T.S."/>
            <person name="Bruce D."/>
            <person name="Challacombe J.F."/>
            <person name="Gilna P."/>
            <person name="Han C."/>
            <person name="Hill K."/>
            <person name="Hitchcock P."/>
            <person name="Jackson P."/>
            <person name="Keim P."/>
            <person name="Longmire J."/>
            <person name="Lucas S."/>
            <person name="Okinaka R."/>
            <person name="Richardson P."/>
            <person name="Rubin E."/>
            <person name="Tice H."/>
        </authorList>
    </citation>
    <scope>NUCLEOTIDE SEQUENCE [LARGE SCALE GENOMIC DNA]</scope>
    <source>
        <strain>Sterne</strain>
    </source>
</reference>
<keyword id="KW-1185">Reference proteome</keyword>
<keyword id="KW-0687">Ribonucleoprotein</keyword>
<keyword id="KW-0689">Ribosomal protein</keyword>
<feature type="chain" id="PRO_0000177320" description="Large ribosomal subunit protein bL35">
    <location>
        <begin position="1"/>
        <end position="66"/>
    </location>
</feature>
<feature type="region of interest" description="Disordered" evidence="2">
    <location>
        <begin position="1"/>
        <end position="26"/>
    </location>
</feature>
<accession>Q81L16</accession>
<accession>Q6HSH1</accession>
<accession>Q6KLR6</accession>
<evidence type="ECO:0000255" key="1">
    <source>
        <dbReference type="HAMAP-Rule" id="MF_00514"/>
    </source>
</evidence>
<evidence type="ECO:0000256" key="2">
    <source>
        <dbReference type="SAM" id="MobiDB-lite"/>
    </source>
</evidence>
<evidence type="ECO:0000305" key="3"/>
<dbReference type="EMBL" id="AE016879">
    <property type="protein sequence ID" value="AAP28507.1"/>
    <property type="molecule type" value="Genomic_DNA"/>
</dbReference>
<dbReference type="EMBL" id="AE017334">
    <property type="protein sequence ID" value="AAT33939.1"/>
    <property type="molecule type" value="Genomic_DNA"/>
</dbReference>
<dbReference type="EMBL" id="AE017225">
    <property type="protein sequence ID" value="AAT56768.1"/>
    <property type="molecule type" value="Genomic_DNA"/>
</dbReference>
<dbReference type="RefSeq" id="NP_847021.1">
    <property type="nucleotide sequence ID" value="NC_003997.3"/>
</dbReference>
<dbReference type="RefSeq" id="WP_001125945.1">
    <property type="nucleotide sequence ID" value="NZ_WXXJ01000026.1"/>
</dbReference>
<dbReference type="RefSeq" id="YP_030717.1">
    <property type="nucleotide sequence ID" value="NC_005945.1"/>
</dbReference>
<dbReference type="SMR" id="Q81L16"/>
<dbReference type="STRING" id="261594.GBAA_4818"/>
<dbReference type="DNASU" id="1083956"/>
<dbReference type="GeneID" id="93006536"/>
<dbReference type="KEGG" id="ban:BA_4818"/>
<dbReference type="KEGG" id="bar:GBAA_4818"/>
<dbReference type="KEGG" id="bat:BAS4470"/>
<dbReference type="PATRIC" id="fig|198094.11.peg.4779"/>
<dbReference type="eggNOG" id="COG0291">
    <property type="taxonomic scope" value="Bacteria"/>
</dbReference>
<dbReference type="HOGENOM" id="CLU_169643_3_0_9"/>
<dbReference type="OMA" id="PKIKTHR"/>
<dbReference type="OrthoDB" id="47476at2"/>
<dbReference type="Proteomes" id="UP000000427">
    <property type="component" value="Chromosome"/>
</dbReference>
<dbReference type="Proteomes" id="UP000000594">
    <property type="component" value="Chromosome"/>
</dbReference>
<dbReference type="GO" id="GO:0022625">
    <property type="term" value="C:cytosolic large ribosomal subunit"/>
    <property type="evidence" value="ECO:0007669"/>
    <property type="project" value="TreeGrafter"/>
</dbReference>
<dbReference type="GO" id="GO:0003735">
    <property type="term" value="F:structural constituent of ribosome"/>
    <property type="evidence" value="ECO:0007669"/>
    <property type="project" value="InterPro"/>
</dbReference>
<dbReference type="GO" id="GO:0006412">
    <property type="term" value="P:translation"/>
    <property type="evidence" value="ECO:0007669"/>
    <property type="project" value="UniProtKB-UniRule"/>
</dbReference>
<dbReference type="FunFam" id="4.10.410.60:FF:000001">
    <property type="entry name" value="50S ribosomal protein L35"/>
    <property type="match status" value="1"/>
</dbReference>
<dbReference type="Gene3D" id="4.10.410.60">
    <property type="match status" value="1"/>
</dbReference>
<dbReference type="HAMAP" id="MF_00514">
    <property type="entry name" value="Ribosomal_bL35"/>
    <property type="match status" value="1"/>
</dbReference>
<dbReference type="InterPro" id="IPR001706">
    <property type="entry name" value="Ribosomal_bL35"/>
</dbReference>
<dbReference type="InterPro" id="IPR021137">
    <property type="entry name" value="Ribosomal_bL35-like"/>
</dbReference>
<dbReference type="InterPro" id="IPR018265">
    <property type="entry name" value="Ribosomal_bL35_CS"/>
</dbReference>
<dbReference type="InterPro" id="IPR037229">
    <property type="entry name" value="Ribosomal_bL35_sf"/>
</dbReference>
<dbReference type="NCBIfam" id="TIGR00001">
    <property type="entry name" value="rpmI_bact"/>
    <property type="match status" value="1"/>
</dbReference>
<dbReference type="PANTHER" id="PTHR33343">
    <property type="entry name" value="54S RIBOSOMAL PROTEIN BL35M"/>
    <property type="match status" value="1"/>
</dbReference>
<dbReference type="PANTHER" id="PTHR33343:SF1">
    <property type="entry name" value="LARGE RIBOSOMAL SUBUNIT PROTEIN BL35M"/>
    <property type="match status" value="1"/>
</dbReference>
<dbReference type="Pfam" id="PF01632">
    <property type="entry name" value="Ribosomal_L35p"/>
    <property type="match status" value="1"/>
</dbReference>
<dbReference type="PRINTS" id="PR00064">
    <property type="entry name" value="RIBOSOMALL35"/>
</dbReference>
<dbReference type="SUPFAM" id="SSF143034">
    <property type="entry name" value="L35p-like"/>
    <property type="match status" value="1"/>
</dbReference>
<dbReference type="PROSITE" id="PS00936">
    <property type="entry name" value="RIBOSOMAL_L35"/>
    <property type="match status" value="1"/>
</dbReference>
<name>RL35_BACAN</name>
<gene>
    <name evidence="1" type="primary">rpmI</name>
    <name type="ordered locus">BA_4818</name>
    <name type="ordered locus">GBAA_4818</name>
    <name type="ordered locus">BAS4470</name>
</gene>
<protein>
    <recommendedName>
        <fullName evidence="1">Large ribosomal subunit protein bL35</fullName>
    </recommendedName>
    <alternativeName>
        <fullName evidence="3">50S ribosomal protein L35</fullName>
    </alternativeName>
</protein>
<proteinExistence type="inferred from homology"/>
<organism>
    <name type="scientific">Bacillus anthracis</name>
    <dbReference type="NCBI Taxonomy" id="1392"/>
    <lineage>
        <taxon>Bacteria</taxon>
        <taxon>Bacillati</taxon>
        <taxon>Bacillota</taxon>
        <taxon>Bacilli</taxon>
        <taxon>Bacillales</taxon>
        <taxon>Bacillaceae</taxon>
        <taxon>Bacillus</taxon>
        <taxon>Bacillus cereus group</taxon>
    </lineage>
</organism>
<comment type="similarity">
    <text evidence="1">Belongs to the bacterial ribosomal protein bL35 family.</text>
</comment>
<sequence>MPKQKTHRGAAKRFKKTGSGKLKRSHAYTSHLFANKSTKAKRKLRKAGVVSAGDFKRIRQMLDNLK</sequence>